<gene>
    <name evidence="1" type="primary">maeA</name>
    <name type="ordered locus">SNSL254_A1680</name>
</gene>
<name>MAO1_SALNS</name>
<proteinExistence type="inferred from homology"/>
<reference key="1">
    <citation type="journal article" date="2011" name="J. Bacteriol.">
        <title>Comparative genomics of 28 Salmonella enterica isolates: evidence for CRISPR-mediated adaptive sublineage evolution.</title>
        <authorList>
            <person name="Fricke W.F."/>
            <person name="Mammel M.K."/>
            <person name="McDermott P.F."/>
            <person name="Tartera C."/>
            <person name="White D.G."/>
            <person name="Leclerc J.E."/>
            <person name="Ravel J."/>
            <person name="Cebula T.A."/>
        </authorList>
    </citation>
    <scope>NUCLEOTIDE SEQUENCE [LARGE SCALE GENOMIC DNA]</scope>
    <source>
        <strain>SL254</strain>
    </source>
</reference>
<evidence type="ECO:0000255" key="1">
    <source>
        <dbReference type="HAMAP-Rule" id="MF_01619"/>
    </source>
</evidence>
<keyword id="KW-0479">Metal-binding</keyword>
<keyword id="KW-0520">NAD</keyword>
<keyword id="KW-0560">Oxidoreductase</keyword>
<accession>B4T5V6</accession>
<sequence length="565" mass="62910">METTTKKARSLYIPYAGPVLLEFPLLNKGSAFSVEERRNFNLSGLLPEVVESIEEQAERAWLQYQGFKTEIDKHIYLRNIQDTNETLFYRLVQNHLEEMMPVIYTPTVGAACERFSEIYRRARGVFISYPNRHNMDDILQNVPNHNIKVIVVTDGERILGLGDQGIGGMGIPIGKLSLYTACGGISPAYTLPVVLDVGTNNQQLLNDPLYMGWRHPRITDDEYYAFVDEFIQAVKQRWPDILLQFEDFAQKNAMPLLTRYRDEICSFNDDIQGTAAVTVGTLIAASRAAGSQLSEQKIVFLGAGSAGCGIAEQIIAQTQREGLSEDAARQNVFMVDRFGLLTDRMPNLLPFQAKLVQKCDNLQHWDTENDVLSLLDVVRNVKPDILIGVSGQTGLFTEEIIREMHKHCPRPIVMPLSNPTSRVEATPQDIIAWTEGNALVATGSPFSPVIWKDKIYPIAQCNNAYIFPGIGLGVIASGASRITDEMLMSASETLAKHSPLVNNGEGLVLPALKDIQVVSRAIAFAVGKMAQQQGVAVKTSAEALQQAIDDNFWKPEYRDYRRTSI</sequence>
<protein>
    <recommendedName>
        <fullName evidence="1">NAD-dependent malic enzyme</fullName>
        <shortName evidence="1">NAD-ME</shortName>
        <ecNumber evidence="1">1.1.1.38</ecNumber>
    </recommendedName>
</protein>
<comment type="catalytic activity">
    <reaction evidence="1">
        <text>(S)-malate + NAD(+) = pyruvate + CO2 + NADH</text>
        <dbReference type="Rhea" id="RHEA:12653"/>
        <dbReference type="ChEBI" id="CHEBI:15361"/>
        <dbReference type="ChEBI" id="CHEBI:15589"/>
        <dbReference type="ChEBI" id="CHEBI:16526"/>
        <dbReference type="ChEBI" id="CHEBI:57540"/>
        <dbReference type="ChEBI" id="CHEBI:57945"/>
        <dbReference type="EC" id="1.1.1.38"/>
    </reaction>
</comment>
<comment type="catalytic activity">
    <reaction evidence="1">
        <text>oxaloacetate + H(+) = pyruvate + CO2</text>
        <dbReference type="Rhea" id="RHEA:15641"/>
        <dbReference type="ChEBI" id="CHEBI:15361"/>
        <dbReference type="ChEBI" id="CHEBI:15378"/>
        <dbReference type="ChEBI" id="CHEBI:16452"/>
        <dbReference type="ChEBI" id="CHEBI:16526"/>
        <dbReference type="EC" id="1.1.1.38"/>
    </reaction>
</comment>
<comment type="cofactor">
    <cofactor evidence="1">
        <name>Mg(2+)</name>
        <dbReference type="ChEBI" id="CHEBI:18420"/>
    </cofactor>
    <cofactor evidence="1">
        <name>Mn(2+)</name>
        <dbReference type="ChEBI" id="CHEBI:29035"/>
    </cofactor>
    <text evidence="1">Divalent metal cations. Prefers magnesium or manganese.</text>
</comment>
<comment type="subunit">
    <text evidence="1">Homotetramer.</text>
</comment>
<comment type="similarity">
    <text evidence="1">Belongs to the malic enzymes family.</text>
</comment>
<organism>
    <name type="scientific">Salmonella newport (strain SL254)</name>
    <dbReference type="NCBI Taxonomy" id="423368"/>
    <lineage>
        <taxon>Bacteria</taxon>
        <taxon>Pseudomonadati</taxon>
        <taxon>Pseudomonadota</taxon>
        <taxon>Gammaproteobacteria</taxon>
        <taxon>Enterobacterales</taxon>
        <taxon>Enterobacteriaceae</taxon>
        <taxon>Salmonella</taxon>
    </lineage>
</organism>
<feature type="chain" id="PRO_1000186008" description="NAD-dependent malic enzyme">
    <location>
        <begin position="1"/>
        <end position="565"/>
    </location>
</feature>
<feature type="active site" description="Proton donor" evidence="1">
    <location>
        <position position="104"/>
    </location>
</feature>
<feature type="active site" description="Proton acceptor" evidence="1">
    <location>
        <position position="175"/>
    </location>
</feature>
<feature type="binding site" evidence="1">
    <location>
        <position position="157"/>
    </location>
    <ligand>
        <name>NAD(+)</name>
        <dbReference type="ChEBI" id="CHEBI:57540"/>
    </ligand>
</feature>
<feature type="binding site" evidence="1">
    <location>
        <position position="246"/>
    </location>
    <ligand>
        <name>a divalent metal cation</name>
        <dbReference type="ChEBI" id="CHEBI:60240"/>
    </ligand>
</feature>
<feature type="binding site" evidence="1">
    <location>
        <position position="247"/>
    </location>
    <ligand>
        <name>a divalent metal cation</name>
        <dbReference type="ChEBI" id="CHEBI:60240"/>
    </ligand>
</feature>
<feature type="binding site" evidence="1">
    <location>
        <position position="270"/>
    </location>
    <ligand>
        <name>a divalent metal cation</name>
        <dbReference type="ChEBI" id="CHEBI:60240"/>
    </ligand>
</feature>
<feature type="binding site" evidence="1">
    <location>
        <position position="270"/>
    </location>
    <ligand>
        <name>NAD(+)</name>
        <dbReference type="ChEBI" id="CHEBI:57540"/>
    </ligand>
</feature>
<feature type="binding site" evidence="1">
    <location>
        <position position="418"/>
    </location>
    <ligand>
        <name>NAD(+)</name>
        <dbReference type="ChEBI" id="CHEBI:57540"/>
    </ligand>
</feature>
<feature type="site" description="Important for activity" evidence="1">
    <location>
        <position position="270"/>
    </location>
</feature>
<dbReference type="EC" id="1.1.1.38" evidence="1"/>
<dbReference type="EMBL" id="CP001113">
    <property type="protein sequence ID" value="ACF61377.1"/>
    <property type="molecule type" value="Genomic_DNA"/>
</dbReference>
<dbReference type="RefSeq" id="WP_000450509.1">
    <property type="nucleotide sequence ID" value="NZ_CCMR01000003.1"/>
</dbReference>
<dbReference type="SMR" id="B4T5V6"/>
<dbReference type="KEGG" id="see:SNSL254_A1680"/>
<dbReference type="HOGENOM" id="CLU_011405_5_2_6"/>
<dbReference type="Proteomes" id="UP000008824">
    <property type="component" value="Chromosome"/>
</dbReference>
<dbReference type="GO" id="GO:0005829">
    <property type="term" value="C:cytosol"/>
    <property type="evidence" value="ECO:0007669"/>
    <property type="project" value="TreeGrafter"/>
</dbReference>
<dbReference type="GO" id="GO:0004471">
    <property type="term" value="F:malate dehydrogenase (decarboxylating) (NAD+) activity"/>
    <property type="evidence" value="ECO:0007669"/>
    <property type="project" value="UniProtKB-UniRule"/>
</dbReference>
<dbReference type="GO" id="GO:0046872">
    <property type="term" value="F:metal ion binding"/>
    <property type="evidence" value="ECO:0007669"/>
    <property type="project" value="UniProtKB-KW"/>
</dbReference>
<dbReference type="GO" id="GO:0051287">
    <property type="term" value="F:NAD binding"/>
    <property type="evidence" value="ECO:0007669"/>
    <property type="project" value="InterPro"/>
</dbReference>
<dbReference type="GO" id="GO:0008948">
    <property type="term" value="F:oxaloacetate decarboxylase activity"/>
    <property type="evidence" value="ECO:0007669"/>
    <property type="project" value="UniProtKB-UniRule"/>
</dbReference>
<dbReference type="GO" id="GO:0006108">
    <property type="term" value="P:malate metabolic process"/>
    <property type="evidence" value="ECO:0007669"/>
    <property type="project" value="TreeGrafter"/>
</dbReference>
<dbReference type="CDD" id="cd05312">
    <property type="entry name" value="NAD_bind_1_malic_enz"/>
    <property type="match status" value="1"/>
</dbReference>
<dbReference type="FunFam" id="3.40.50.10380:FF:000001">
    <property type="entry name" value="NAD-dependent malic enzyme"/>
    <property type="match status" value="1"/>
</dbReference>
<dbReference type="FunFam" id="3.40.50.720:FF:000055">
    <property type="entry name" value="NAD-dependent malic enzyme"/>
    <property type="match status" value="1"/>
</dbReference>
<dbReference type="Gene3D" id="3.40.50.10380">
    <property type="entry name" value="Malic enzyme, N-terminal domain"/>
    <property type="match status" value="1"/>
</dbReference>
<dbReference type="Gene3D" id="3.40.50.720">
    <property type="entry name" value="NAD(P)-binding Rossmann-like Domain"/>
    <property type="match status" value="1"/>
</dbReference>
<dbReference type="HAMAP" id="MF_01619">
    <property type="entry name" value="NAD_malic_enz"/>
    <property type="match status" value="1"/>
</dbReference>
<dbReference type="InterPro" id="IPR046346">
    <property type="entry name" value="Aminoacid_DH-like_N_sf"/>
</dbReference>
<dbReference type="InterPro" id="IPR015884">
    <property type="entry name" value="Malic_enzyme_CS"/>
</dbReference>
<dbReference type="InterPro" id="IPR012301">
    <property type="entry name" value="Malic_N_dom"/>
</dbReference>
<dbReference type="InterPro" id="IPR037062">
    <property type="entry name" value="Malic_N_dom_sf"/>
</dbReference>
<dbReference type="InterPro" id="IPR012302">
    <property type="entry name" value="Malic_NAD-bd"/>
</dbReference>
<dbReference type="InterPro" id="IPR001891">
    <property type="entry name" value="Malic_OxRdtase"/>
</dbReference>
<dbReference type="InterPro" id="IPR036291">
    <property type="entry name" value="NAD(P)-bd_dom_sf"/>
</dbReference>
<dbReference type="InterPro" id="IPR023667">
    <property type="entry name" value="NAD_malic_enz_proteobac"/>
</dbReference>
<dbReference type="NCBIfam" id="NF010052">
    <property type="entry name" value="PRK13529.1"/>
    <property type="match status" value="1"/>
</dbReference>
<dbReference type="PANTHER" id="PTHR23406">
    <property type="entry name" value="MALIC ENZYME-RELATED"/>
    <property type="match status" value="1"/>
</dbReference>
<dbReference type="PANTHER" id="PTHR23406:SF34">
    <property type="entry name" value="NAD-DEPENDENT MALIC ENZYME, MITOCHONDRIAL"/>
    <property type="match status" value="1"/>
</dbReference>
<dbReference type="Pfam" id="PF00390">
    <property type="entry name" value="malic"/>
    <property type="match status" value="1"/>
</dbReference>
<dbReference type="Pfam" id="PF03949">
    <property type="entry name" value="Malic_M"/>
    <property type="match status" value="1"/>
</dbReference>
<dbReference type="PIRSF" id="PIRSF000106">
    <property type="entry name" value="ME"/>
    <property type="match status" value="1"/>
</dbReference>
<dbReference type="PRINTS" id="PR00072">
    <property type="entry name" value="MALOXRDTASE"/>
</dbReference>
<dbReference type="SMART" id="SM01274">
    <property type="entry name" value="malic"/>
    <property type="match status" value="1"/>
</dbReference>
<dbReference type="SMART" id="SM00919">
    <property type="entry name" value="Malic_M"/>
    <property type="match status" value="1"/>
</dbReference>
<dbReference type="SUPFAM" id="SSF53223">
    <property type="entry name" value="Aminoacid dehydrogenase-like, N-terminal domain"/>
    <property type="match status" value="1"/>
</dbReference>
<dbReference type="SUPFAM" id="SSF51735">
    <property type="entry name" value="NAD(P)-binding Rossmann-fold domains"/>
    <property type="match status" value="1"/>
</dbReference>
<dbReference type="PROSITE" id="PS00331">
    <property type="entry name" value="MALIC_ENZYMES"/>
    <property type="match status" value="1"/>
</dbReference>